<comment type="similarity">
    <text evidence="1">Belongs to the costars family.</text>
</comment>
<sequence length="81" mass="8952">MNVQHEVSLLVGEIQRLGSKNADGQTCVKFGVLFNDDRCANIFEALVGTLRAAKRKKIIAFEGELLLQGVHDNVDITLLQE</sequence>
<protein>
    <recommendedName>
        <fullName>Costars family protein ABRACL</fullName>
    </recommendedName>
    <alternativeName>
        <fullName>ABRA C-terminal-like protein</fullName>
    </alternativeName>
</protein>
<dbReference type="EMBL" id="BT047274">
    <property type="protein sequence ID" value="ACI67075.1"/>
    <property type="molecule type" value="mRNA"/>
</dbReference>
<dbReference type="EMBL" id="BT048483">
    <property type="protein sequence ID" value="ACI68284.1"/>
    <property type="molecule type" value="mRNA"/>
</dbReference>
<dbReference type="RefSeq" id="NP_001134634.1">
    <property type="nucleotide sequence ID" value="NM_001141162.2"/>
</dbReference>
<dbReference type="RefSeq" id="XP_014060206.1">
    <property type="nucleotide sequence ID" value="XM_014204731.1"/>
</dbReference>
<dbReference type="RefSeq" id="XP_014060207.1">
    <property type="nucleotide sequence ID" value="XM_014204732.1"/>
</dbReference>
<dbReference type="RefSeq" id="XP_014060209.1">
    <property type="nucleotide sequence ID" value="XM_014204734.1"/>
</dbReference>
<dbReference type="RefSeq" id="XP_014060210.1">
    <property type="nucleotide sequence ID" value="XM_014204735.2"/>
</dbReference>
<dbReference type="SMR" id="B5X8A5"/>
<dbReference type="STRING" id="8030.ENSSSAP00000086671"/>
<dbReference type="PaxDb" id="8030-ENSSSAP00000086671"/>
<dbReference type="Ensembl" id="ENSSSAT00070064682">
    <property type="protein sequence ID" value="ENSSSAP00070061999"/>
    <property type="gene ID" value="ENSSSAG00070040236"/>
</dbReference>
<dbReference type="GeneID" id="100196133"/>
<dbReference type="KEGG" id="sasa:100196133"/>
<dbReference type="CTD" id="58527"/>
<dbReference type="OrthoDB" id="398264at7898"/>
<dbReference type="Proteomes" id="UP000087266">
    <property type="component" value="Chromosome ssa06"/>
</dbReference>
<dbReference type="Bgee" id="ENSSSAG00000069421">
    <property type="expression patterns" value="Expressed in ileum and 25 other cell types or tissues"/>
</dbReference>
<dbReference type="GO" id="GO:0032970">
    <property type="term" value="P:regulation of actin filament-based process"/>
    <property type="evidence" value="ECO:0007669"/>
    <property type="project" value="TreeGrafter"/>
</dbReference>
<dbReference type="FunFam" id="1.10.10.1540:FF:000002">
    <property type="entry name" value="costars family protein ABRACL"/>
    <property type="match status" value="1"/>
</dbReference>
<dbReference type="Gene3D" id="1.10.10.1540">
    <property type="entry name" value="Costar domain"/>
    <property type="match status" value="1"/>
</dbReference>
<dbReference type="InterPro" id="IPR044302">
    <property type="entry name" value="Costars"/>
</dbReference>
<dbReference type="InterPro" id="IPR027817">
    <property type="entry name" value="Costars_dom"/>
</dbReference>
<dbReference type="InterPro" id="IPR038095">
    <property type="entry name" value="Costars_sf"/>
</dbReference>
<dbReference type="PANTHER" id="PTHR46334">
    <property type="entry name" value="COSTARS FAMILY PROTEIN ABRACL"/>
    <property type="match status" value="1"/>
</dbReference>
<dbReference type="PANTHER" id="PTHR46334:SF1">
    <property type="entry name" value="COSTARS FAMILY PROTEIN ABRACL"/>
    <property type="match status" value="1"/>
</dbReference>
<dbReference type="Pfam" id="PF14705">
    <property type="entry name" value="Costars"/>
    <property type="match status" value="1"/>
</dbReference>
<dbReference type="SMART" id="SM01283">
    <property type="entry name" value="Costars"/>
    <property type="match status" value="1"/>
</dbReference>
<proteinExistence type="inferred from homology"/>
<organism>
    <name type="scientific">Salmo salar</name>
    <name type="common">Atlantic salmon</name>
    <dbReference type="NCBI Taxonomy" id="8030"/>
    <lineage>
        <taxon>Eukaryota</taxon>
        <taxon>Metazoa</taxon>
        <taxon>Chordata</taxon>
        <taxon>Craniata</taxon>
        <taxon>Vertebrata</taxon>
        <taxon>Euteleostomi</taxon>
        <taxon>Actinopterygii</taxon>
        <taxon>Neopterygii</taxon>
        <taxon>Teleostei</taxon>
        <taxon>Protacanthopterygii</taxon>
        <taxon>Salmoniformes</taxon>
        <taxon>Salmonidae</taxon>
        <taxon>Salmoninae</taxon>
        <taxon>Salmo</taxon>
    </lineage>
</organism>
<keyword id="KW-1185">Reference proteome</keyword>
<feature type="chain" id="PRO_0000365539" description="Costars family protein ABRACL">
    <location>
        <begin position="1"/>
        <end position="81"/>
    </location>
</feature>
<feature type="sequence conflict" description="In Ref. 1; ACI68284." evidence="1" ref="1">
    <original>L</original>
    <variation>P</variation>
    <location>
        <position position="66"/>
    </location>
</feature>
<name>ABRAL_SALSA</name>
<evidence type="ECO:0000305" key="1"/>
<reference key="1">
    <citation type="journal article" date="2010" name="BMC Genomics">
        <title>Salmo salar and Esox lucius full-length cDNA sequences reveal changes in evolutionary pressures on a post-tetraploidization genome.</title>
        <authorList>
            <person name="Leong J.S."/>
            <person name="Jantzen S.G."/>
            <person name="von Schalburg K.R."/>
            <person name="Cooper G.A."/>
            <person name="Messmer A.M."/>
            <person name="Liao N.Y."/>
            <person name="Munro S."/>
            <person name="Moore R."/>
            <person name="Holt R.A."/>
            <person name="Jones S.J."/>
            <person name="Davidson W.S."/>
            <person name="Koop B.F."/>
        </authorList>
    </citation>
    <scope>NUCLEOTIDE SEQUENCE [LARGE SCALE MRNA]</scope>
    <source>
        <tissue>Brain</tissue>
    </source>
</reference>
<accession>B5X8A5</accession>
<accession>B5XBR4</accession>